<protein>
    <recommendedName>
        <fullName evidence="4">Phosphoenolpyruvate-protein phosphotransferase</fullName>
        <ecNumber evidence="1">2.7.3.9</ecNumber>
    </recommendedName>
    <alternativeName>
        <fullName evidence="4">Phosphotransferase system, enzyme I</fullName>
    </alternativeName>
</protein>
<accession>P45617</accession>
<accession>Q2SSP3</accession>
<gene>
    <name type="primary">ptsI</name>
    <name type="ordered locus">MCAP_0233</name>
</gene>
<sequence length="573" mass="64602">MSKQIKGIAASEGISLARALVIKETKLDIQKQLISDVDQEIIKLEQAIEKSIADLKKIQQITLKKLGEEKAAIFDAHQDIANDPAIKEEVVELIKKEKVNAEYALFTVSNNYFEMFSQLEDPYFKERSADIKDVSLRIISHILGLEIHDLSTIDKEVIIISDDLTPSQTAQLDKKFVKGFLTNVGGRTSHAAIMARSLEIPAILGLKNITELVKTDDLIALDGSSGIVELDLNDDDIKNYQTKVQQYIELKEQLKKFKDEPSLTKDKIKKLIEANIGSTNDVQSVLDSGAEGIGLFRTEFLYMDNDHFPTEEEQFEAYKKVVSQIKHLVVFRTLDIGGDKKLSYFKFDEEMNPFLGYRAIRFTLDRKDIFKDQIRALLRASAFGKLGIMFPMIATIDEFKQAKTFVEECKIELDKEGIKYDNQVQIGMMVEIPSAAILADQFAKYADFFSIGTNDLIQYSFASDRMNQNVSYLYQPLNPSLLRLIQLTISGAHKHNKWVGMCGEMAGDSKALPILLGLDLDAFSMSATSVLKARSLMSKIEFSKAKILANKVLECETNEQVNKLVEDFLNNLD</sequence>
<name>PT1_MYCCT</name>
<comment type="function">
    <text evidence="1 6">General (non sugar-specific) component of the phosphoenolpyruvate-dependent sugar phosphotransferase system (sugar PTS). This major carbohydrate active-transport system catalyzes the phosphorylation of incoming sugar substrates concomitantly with their translocation across the cell membrane. Enzyme I transfers the phosphoryl group from phosphoenolpyruvate (PEP) to the phosphoryl carrier protein (HPr).</text>
</comment>
<comment type="catalytic activity">
    <reaction evidence="1">
        <text>L-histidyl-[protein] + phosphoenolpyruvate = N(pros)-phospho-L-histidyl-[protein] + pyruvate</text>
        <dbReference type="Rhea" id="RHEA:23880"/>
        <dbReference type="Rhea" id="RHEA-COMP:9745"/>
        <dbReference type="Rhea" id="RHEA-COMP:9746"/>
        <dbReference type="ChEBI" id="CHEBI:15361"/>
        <dbReference type="ChEBI" id="CHEBI:29979"/>
        <dbReference type="ChEBI" id="CHEBI:58702"/>
        <dbReference type="ChEBI" id="CHEBI:64837"/>
        <dbReference type="EC" id="2.7.3.9"/>
    </reaction>
</comment>
<comment type="cofactor">
    <cofactor evidence="1">
        <name>Mg(2+)</name>
        <dbReference type="ChEBI" id="CHEBI:18420"/>
    </cofactor>
</comment>
<comment type="activity regulation">
    <text evidence="3">Irreversibly inhibited the sulfhydryl reagent N-ethylmaleimide (NEM).</text>
</comment>
<comment type="subunit">
    <text evidence="1 6">Homodimer.</text>
</comment>
<comment type="subcellular location">
    <subcellularLocation>
        <location evidence="7">Cytoplasm</location>
    </subcellularLocation>
</comment>
<comment type="domain">
    <text evidence="1">The N-terminal domain contains the HPr binding site, the central domain the pyrophosphate/phosphate carrier histidine, and the C-terminal domain the pyruvate binding site.</text>
</comment>
<comment type="miscellaneous">
    <text evidence="1">The reaction takes place in three steps, mediated by a phosphocarrier histidine residue located on the surface of the central domain. The two first partial reactions are catalyzed at an active site located on the N-terminal domain, and the third partial reaction is catalyzed at an active site located on the C-terminal domain. For catalytic turnover, the central domain swivels from the concave surface of the N-terminal domain to that of the C-terminal domain.</text>
</comment>
<comment type="similarity">
    <text evidence="5">Belongs to the PEP-utilizing enzyme family.</text>
</comment>
<evidence type="ECO:0000250" key="1">
    <source>
        <dbReference type="UniProtKB" id="P08839"/>
    </source>
</evidence>
<evidence type="ECO:0000250" key="2">
    <source>
        <dbReference type="UniProtKB" id="P23533"/>
    </source>
</evidence>
<evidence type="ECO:0000269" key="3">
    <source>
    </source>
</evidence>
<evidence type="ECO:0000303" key="4">
    <source>
    </source>
</evidence>
<evidence type="ECO:0000305" key="5"/>
<evidence type="ECO:0000305" key="6">
    <source>
    </source>
</evidence>
<evidence type="ECO:0000305" key="7">
    <source>
    </source>
</evidence>
<proteinExistence type="evidence at protein level"/>
<keyword id="KW-0963">Cytoplasm</keyword>
<keyword id="KW-0418">Kinase</keyword>
<keyword id="KW-0460">Magnesium</keyword>
<keyword id="KW-0479">Metal-binding</keyword>
<keyword id="KW-0598">Phosphotransferase system</keyword>
<keyword id="KW-0762">Sugar transport</keyword>
<keyword id="KW-0808">Transferase</keyword>
<keyword id="KW-0813">Transport</keyword>
<dbReference type="EC" id="2.7.3.9" evidence="1"/>
<dbReference type="EMBL" id="U15110">
    <property type="protein sequence ID" value="AAA70406.1"/>
    <property type="molecule type" value="Genomic_DNA"/>
</dbReference>
<dbReference type="EMBL" id="CP000123">
    <property type="protein sequence ID" value="ABC01377.1"/>
    <property type="molecule type" value="Genomic_DNA"/>
</dbReference>
<dbReference type="RefSeq" id="WP_011387121.1">
    <property type="nucleotide sequence ID" value="NC_007633.1"/>
</dbReference>
<dbReference type="SMR" id="P45617"/>
<dbReference type="GeneID" id="23778814"/>
<dbReference type="KEGG" id="mcp:MCAP_0233"/>
<dbReference type="HOGENOM" id="CLU_007308_7_0_14"/>
<dbReference type="PhylomeDB" id="P45617"/>
<dbReference type="Proteomes" id="UP000001928">
    <property type="component" value="Chromosome"/>
</dbReference>
<dbReference type="GO" id="GO:0005737">
    <property type="term" value="C:cytoplasm"/>
    <property type="evidence" value="ECO:0007669"/>
    <property type="project" value="UniProtKB-SubCell"/>
</dbReference>
<dbReference type="GO" id="GO:0016301">
    <property type="term" value="F:kinase activity"/>
    <property type="evidence" value="ECO:0007669"/>
    <property type="project" value="UniProtKB-KW"/>
</dbReference>
<dbReference type="GO" id="GO:0046872">
    <property type="term" value="F:metal ion binding"/>
    <property type="evidence" value="ECO:0007669"/>
    <property type="project" value="UniProtKB-KW"/>
</dbReference>
<dbReference type="GO" id="GO:0008965">
    <property type="term" value="F:phosphoenolpyruvate-protein phosphotransferase activity"/>
    <property type="evidence" value="ECO:0007669"/>
    <property type="project" value="UniProtKB-EC"/>
</dbReference>
<dbReference type="GO" id="GO:0009401">
    <property type="term" value="P:phosphoenolpyruvate-dependent sugar phosphotransferase system"/>
    <property type="evidence" value="ECO:0007669"/>
    <property type="project" value="UniProtKB-KW"/>
</dbReference>
<dbReference type="Gene3D" id="3.20.20.60">
    <property type="entry name" value="Phosphoenolpyruvate-binding domains"/>
    <property type="match status" value="1"/>
</dbReference>
<dbReference type="Gene3D" id="3.50.30.10">
    <property type="entry name" value="Phosphohistidine domain"/>
    <property type="match status" value="1"/>
</dbReference>
<dbReference type="Gene3D" id="1.10.274.10">
    <property type="entry name" value="PtsI, HPr-binding domain"/>
    <property type="match status" value="1"/>
</dbReference>
<dbReference type="InterPro" id="IPR008279">
    <property type="entry name" value="PEP-util_enz_mobile_dom"/>
</dbReference>
<dbReference type="InterPro" id="IPR050499">
    <property type="entry name" value="PEP-utilizing_PTS_enzyme"/>
</dbReference>
<dbReference type="InterPro" id="IPR018274">
    <property type="entry name" value="PEP_util_AS"/>
</dbReference>
<dbReference type="InterPro" id="IPR000121">
    <property type="entry name" value="PEP_util_C"/>
</dbReference>
<dbReference type="InterPro" id="IPR023151">
    <property type="entry name" value="PEP_util_CS"/>
</dbReference>
<dbReference type="InterPro" id="IPR036637">
    <property type="entry name" value="Phosphohistidine_dom_sf"/>
</dbReference>
<dbReference type="InterPro" id="IPR024692">
    <property type="entry name" value="PTS_EI"/>
</dbReference>
<dbReference type="InterPro" id="IPR006318">
    <property type="entry name" value="PTS_EI-like"/>
</dbReference>
<dbReference type="InterPro" id="IPR008731">
    <property type="entry name" value="PTS_EIN"/>
</dbReference>
<dbReference type="InterPro" id="IPR036618">
    <property type="entry name" value="PtsI_HPr-bd_sf"/>
</dbReference>
<dbReference type="InterPro" id="IPR015813">
    <property type="entry name" value="Pyrv/PenolPyrv_kinase-like_dom"/>
</dbReference>
<dbReference type="InterPro" id="IPR040442">
    <property type="entry name" value="Pyrv_kinase-like_dom_sf"/>
</dbReference>
<dbReference type="NCBIfam" id="TIGR01417">
    <property type="entry name" value="PTS_I_fam"/>
    <property type="match status" value="1"/>
</dbReference>
<dbReference type="PANTHER" id="PTHR46244">
    <property type="entry name" value="PHOSPHOENOLPYRUVATE-PROTEIN PHOSPHOTRANSFERASE"/>
    <property type="match status" value="1"/>
</dbReference>
<dbReference type="PANTHER" id="PTHR46244:SF3">
    <property type="entry name" value="PHOSPHOENOLPYRUVATE-PROTEIN PHOSPHOTRANSFERASE"/>
    <property type="match status" value="1"/>
</dbReference>
<dbReference type="Pfam" id="PF05524">
    <property type="entry name" value="PEP-utilisers_N"/>
    <property type="match status" value="1"/>
</dbReference>
<dbReference type="Pfam" id="PF00391">
    <property type="entry name" value="PEP-utilizers"/>
    <property type="match status" value="1"/>
</dbReference>
<dbReference type="Pfam" id="PF02896">
    <property type="entry name" value="PEP-utilizers_C"/>
    <property type="match status" value="1"/>
</dbReference>
<dbReference type="PIRSF" id="PIRSF000732">
    <property type="entry name" value="PTS_enzyme_I"/>
    <property type="match status" value="1"/>
</dbReference>
<dbReference type="PRINTS" id="PR01736">
    <property type="entry name" value="PHPHTRNFRASE"/>
</dbReference>
<dbReference type="SUPFAM" id="SSF47831">
    <property type="entry name" value="Enzyme I of the PEP:sugar phosphotransferase system HPr-binding (sub)domain"/>
    <property type="match status" value="1"/>
</dbReference>
<dbReference type="SUPFAM" id="SSF51621">
    <property type="entry name" value="Phosphoenolpyruvate/pyruvate domain"/>
    <property type="match status" value="1"/>
</dbReference>
<dbReference type="SUPFAM" id="SSF52009">
    <property type="entry name" value="Phosphohistidine domain"/>
    <property type="match status" value="1"/>
</dbReference>
<dbReference type="PROSITE" id="PS00742">
    <property type="entry name" value="PEP_ENZYMES_2"/>
    <property type="match status" value="1"/>
</dbReference>
<dbReference type="PROSITE" id="PS00370">
    <property type="entry name" value="PEP_ENZYMES_PHOS_SITE"/>
    <property type="match status" value="1"/>
</dbReference>
<reference key="1">
    <citation type="journal article" date="1994" name="Protein Sci.">
        <title>Unique dicistronic operon (ptsI-crr) in Mycoplasma capricolum encoding enzyme I and the glucose-specific enzyme IIA of the phosphoenolpyruvate:sugar phosphotransferase system: cloning, sequencing, promoter analysis, and protein characterization.</title>
        <authorList>
            <person name="Zhu P.-P."/>
            <person name="Reizer J."/>
            <person name="Peterkofsky A."/>
        </authorList>
    </citation>
    <scope>NUCLEOTIDE SEQUENCE [GENOMIC DNA]</scope>
</reference>
<reference key="2">
    <citation type="submission" date="2005-09" db="EMBL/GenBank/DDBJ databases">
        <authorList>
            <person name="Glass J.I."/>
            <person name="Lartigue C."/>
            <person name="Pfannkoch C."/>
            <person name="Baden-Tillson H."/>
            <person name="Smith H.O."/>
            <person name="Venter J.C."/>
            <person name="Roske K."/>
            <person name="Wise K.S."/>
            <person name="Calcutt M.J."/>
            <person name="Nelson W.C."/>
            <person name="Nierman W.C."/>
        </authorList>
    </citation>
    <scope>NUCLEOTIDE SEQUENCE [LARGE SCALE GENOMIC DNA]</scope>
    <source>
        <strain>California kid / ATCC 27343 / NCTC 10154</strain>
    </source>
</reference>
<reference key="3">
    <citation type="journal article" date="1976" name="J. Bacteriol.">
        <title>Mycoplasma phosphoenolpyruvate-dependent sugar phosphotransferase system: purification and characterization of the phosphocarrier protein.</title>
        <authorList>
            <person name="Ullah A.H."/>
            <person name="Cirillo V.P."/>
        </authorList>
    </citation>
    <scope>SUBCELLULAR LOCATION</scope>
</reference>
<reference key="4">
    <citation type="journal article" date="1977" name="J. Bacteriol.">
        <title>Mycoplasma phosphoenolpyruvate-dependent sugar phosphotransferase system: purification and characterization of enzyme I.</title>
        <authorList>
            <person name="Jaffor Ullah A.H."/>
            <person name="Cirillo V.P."/>
        </authorList>
    </citation>
    <scope>FUNCTION</scope>
    <scope>ACTIVITY REGULATION</scope>
    <scope>SUBUNIT</scope>
</reference>
<organism>
    <name type="scientific">Mycoplasma capricolum subsp. capricolum (strain California kid / ATCC 27343 / NCTC 10154)</name>
    <dbReference type="NCBI Taxonomy" id="340047"/>
    <lineage>
        <taxon>Bacteria</taxon>
        <taxon>Bacillati</taxon>
        <taxon>Mycoplasmatota</taxon>
        <taxon>Mollicutes</taxon>
        <taxon>Mycoplasmataceae</taxon>
        <taxon>Mycoplasma</taxon>
    </lineage>
</organism>
<feature type="chain" id="PRO_0000147075" description="Phosphoenolpyruvate-protein phosphotransferase">
    <location>
        <begin position="1"/>
        <end position="573"/>
    </location>
</feature>
<feature type="active site" description="Tele-phosphohistidine intermediate" evidence="1">
    <location>
        <position position="190"/>
    </location>
</feature>
<feature type="active site" description="Proton donor" evidence="1">
    <location>
        <position position="502"/>
    </location>
</feature>
<feature type="binding site" evidence="2">
    <location>
        <position position="297"/>
    </location>
    <ligand>
        <name>phosphoenolpyruvate</name>
        <dbReference type="ChEBI" id="CHEBI:58702"/>
    </ligand>
</feature>
<feature type="binding site" evidence="1">
    <location>
        <position position="332"/>
    </location>
    <ligand>
        <name>phosphoenolpyruvate</name>
        <dbReference type="ChEBI" id="CHEBI:58702"/>
    </ligand>
</feature>
<feature type="binding site" evidence="1">
    <location>
        <position position="431"/>
    </location>
    <ligand>
        <name>Mg(2+)</name>
        <dbReference type="ChEBI" id="CHEBI:18420"/>
    </ligand>
</feature>
<feature type="binding site" evidence="1">
    <location>
        <begin position="454"/>
        <end position="455"/>
    </location>
    <ligand>
        <name>phosphoenolpyruvate</name>
        <dbReference type="ChEBI" id="CHEBI:58702"/>
    </ligand>
</feature>
<feature type="binding site" evidence="1">
    <location>
        <position position="455"/>
    </location>
    <ligand>
        <name>Mg(2+)</name>
        <dbReference type="ChEBI" id="CHEBI:18420"/>
    </ligand>
</feature>
<feature type="binding site" evidence="2">
    <location>
        <position position="465"/>
    </location>
    <ligand>
        <name>phosphoenolpyruvate</name>
        <dbReference type="ChEBI" id="CHEBI:58702"/>
    </ligand>
</feature>